<evidence type="ECO:0000255" key="1">
    <source>
        <dbReference type="HAMAP-Rule" id="MF_00012"/>
    </source>
</evidence>
<proteinExistence type="inferred from homology"/>
<feature type="chain" id="PRO_0000225368" description="Dihydroxy-acid dehydratase">
    <location>
        <begin position="1"/>
        <end position="554"/>
    </location>
</feature>
<feature type="active site" description="Proton acceptor" evidence="1">
    <location>
        <position position="469"/>
    </location>
</feature>
<feature type="binding site" evidence="1">
    <location>
        <position position="78"/>
    </location>
    <ligand>
        <name>Mg(2+)</name>
        <dbReference type="ChEBI" id="CHEBI:18420"/>
    </ligand>
</feature>
<feature type="binding site" evidence="1">
    <location>
        <position position="119"/>
    </location>
    <ligand>
        <name>[2Fe-2S] cluster</name>
        <dbReference type="ChEBI" id="CHEBI:190135"/>
    </ligand>
</feature>
<feature type="binding site" evidence="1">
    <location>
        <position position="120"/>
    </location>
    <ligand>
        <name>Mg(2+)</name>
        <dbReference type="ChEBI" id="CHEBI:18420"/>
    </ligand>
</feature>
<feature type="binding site" description="via carbamate group" evidence="1">
    <location>
        <position position="121"/>
    </location>
    <ligand>
        <name>Mg(2+)</name>
        <dbReference type="ChEBI" id="CHEBI:18420"/>
    </ligand>
</feature>
<feature type="binding site" evidence="1">
    <location>
        <position position="192"/>
    </location>
    <ligand>
        <name>[2Fe-2S] cluster</name>
        <dbReference type="ChEBI" id="CHEBI:190135"/>
    </ligand>
</feature>
<feature type="binding site" evidence="1">
    <location>
        <position position="443"/>
    </location>
    <ligand>
        <name>Mg(2+)</name>
        <dbReference type="ChEBI" id="CHEBI:18420"/>
    </ligand>
</feature>
<feature type="modified residue" description="N6-carboxylysine" evidence="1">
    <location>
        <position position="121"/>
    </location>
</feature>
<organism>
    <name type="scientific">Shouchella clausii (strain KSM-K16)</name>
    <name type="common">Alkalihalobacillus clausii</name>
    <dbReference type="NCBI Taxonomy" id="66692"/>
    <lineage>
        <taxon>Bacteria</taxon>
        <taxon>Bacillati</taxon>
        <taxon>Bacillota</taxon>
        <taxon>Bacilli</taxon>
        <taxon>Bacillales</taxon>
        <taxon>Bacillaceae</taxon>
        <taxon>Shouchella</taxon>
    </lineage>
</organism>
<accession>Q5WEM9</accession>
<name>ILVD_SHOC1</name>
<comment type="function">
    <text evidence="1">Functions in the biosynthesis of branched-chain amino acids. Catalyzes the dehydration of (2R,3R)-2,3-dihydroxy-3-methylpentanoate (2,3-dihydroxy-3-methylvalerate) into 2-oxo-3-methylpentanoate (2-oxo-3-methylvalerate) and of (2R)-2,3-dihydroxy-3-methylbutanoate (2,3-dihydroxyisovalerate) into 2-oxo-3-methylbutanoate (2-oxoisovalerate), the penultimate precursor to L-isoleucine and L-valine, respectively.</text>
</comment>
<comment type="catalytic activity">
    <reaction evidence="1">
        <text>(2R)-2,3-dihydroxy-3-methylbutanoate = 3-methyl-2-oxobutanoate + H2O</text>
        <dbReference type="Rhea" id="RHEA:24809"/>
        <dbReference type="ChEBI" id="CHEBI:11851"/>
        <dbReference type="ChEBI" id="CHEBI:15377"/>
        <dbReference type="ChEBI" id="CHEBI:49072"/>
        <dbReference type="EC" id="4.2.1.9"/>
    </reaction>
    <physiologicalReaction direction="left-to-right" evidence="1">
        <dbReference type="Rhea" id="RHEA:24810"/>
    </physiologicalReaction>
</comment>
<comment type="catalytic activity">
    <reaction evidence="1">
        <text>(2R,3R)-2,3-dihydroxy-3-methylpentanoate = (S)-3-methyl-2-oxopentanoate + H2O</text>
        <dbReference type="Rhea" id="RHEA:27694"/>
        <dbReference type="ChEBI" id="CHEBI:15377"/>
        <dbReference type="ChEBI" id="CHEBI:35146"/>
        <dbReference type="ChEBI" id="CHEBI:49258"/>
        <dbReference type="EC" id="4.2.1.9"/>
    </reaction>
    <physiologicalReaction direction="left-to-right" evidence="1">
        <dbReference type="Rhea" id="RHEA:27695"/>
    </physiologicalReaction>
</comment>
<comment type="cofactor">
    <cofactor evidence="1">
        <name>[2Fe-2S] cluster</name>
        <dbReference type="ChEBI" id="CHEBI:190135"/>
    </cofactor>
    <text evidence="1">Binds 1 [2Fe-2S] cluster per subunit. This cluster acts as a Lewis acid cofactor.</text>
</comment>
<comment type="cofactor">
    <cofactor evidence="1">
        <name>Mg(2+)</name>
        <dbReference type="ChEBI" id="CHEBI:18420"/>
    </cofactor>
</comment>
<comment type="pathway">
    <text evidence="1">Amino-acid biosynthesis; L-isoleucine biosynthesis; L-isoleucine from 2-oxobutanoate: step 3/4.</text>
</comment>
<comment type="pathway">
    <text evidence="1">Amino-acid biosynthesis; L-valine biosynthesis; L-valine from pyruvate: step 3/4.</text>
</comment>
<comment type="subunit">
    <text evidence="1">Homodimer.</text>
</comment>
<comment type="similarity">
    <text evidence="1">Belongs to the IlvD/Edd family.</text>
</comment>
<dbReference type="EC" id="4.2.1.9" evidence="1"/>
<dbReference type="EMBL" id="AP006627">
    <property type="protein sequence ID" value="BAD65181.1"/>
    <property type="molecule type" value="Genomic_DNA"/>
</dbReference>
<dbReference type="RefSeq" id="WP_011247489.1">
    <property type="nucleotide sequence ID" value="NC_006582.1"/>
</dbReference>
<dbReference type="SMR" id="Q5WEM9"/>
<dbReference type="STRING" id="66692.ABC2646"/>
<dbReference type="KEGG" id="bcl:ABC2646"/>
<dbReference type="eggNOG" id="COG0129">
    <property type="taxonomic scope" value="Bacteria"/>
</dbReference>
<dbReference type="HOGENOM" id="CLU_014271_4_2_9"/>
<dbReference type="OrthoDB" id="9807077at2"/>
<dbReference type="UniPathway" id="UPA00047">
    <property type="reaction ID" value="UER00057"/>
</dbReference>
<dbReference type="UniPathway" id="UPA00049">
    <property type="reaction ID" value="UER00061"/>
</dbReference>
<dbReference type="Proteomes" id="UP000001168">
    <property type="component" value="Chromosome"/>
</dbReference>
<dbReference type="GO" id="GO:0005829">
    <property type="term" value="C:cytosol"/>
    <property type="evidence" value="ECO:0007669"/>
    <property type="project" value="TreeGrafter"/>
</dbReference>
<dbReference type="GO" id="GO:0051537">
    <property type="term" value="F:2 iron, 2 sulfur cluster binding"/>
    <property type="evidence" value="ECO:0007669"/>
    <property type="project" value="UniProtKB-UniRule"/>
</dbReference>
<dbReference type="GO" id="GO:0004160">
    <property type="term" value="F:dihydroxy-acid dehydratase activity"/>
    <property type="evidence" value="ECO:0007669"/>
    <property type="project" value="UniProtKB-UniRule"/>
</dbReference>
<dbReference type="GO" id="GO:0000287">
    <property type="term" value="F:magnesium ion binding"/>
    <property type="evidence" value="ECO:0007669"/>
    <property type="project" value="UniProtKB-UniRule"/>
</dbReference>
<dbReference type="GO" id="GO:0009097">
    <property type="term" value="P:isoleucine biosynthetic process"/>
    <property type="evidence" value="ECO:0007669"/>
    <property type="project" value="UniProtKB-UniRule"/>
</dbReference>
<dbReference type="GO" id="GO:0009099">
    <property type="term" value="P:L-valine biosynthetic process"/>
    <property type="evidence" value="ECO:0007669"/>
    <property type="project" value="UniProtKB-UniRule"/>
</dbReference>
<dbReference type="FunFam" id="3.50.30.80:FF:000001">
    <property type="entry name" value="Dihydroxy-acid dehydratase"/>
    <property type="match status" value="1"/>
</dbReference>
<dbReference type="Gene3D" id="3.50.30.80">
    <property type="entry name" value="IlvD/EDD C-terminal domain-like"/>
    <property type="match status" value="1"/>
</dbReference>
<dbReference type="HAMAP" id="MF_00012">
    <property type="entry name" value="IlvD"/>
    <property type="match status" value="1"/>
</dbReference>
<dbReference type="InterPro" id="IPR042096">
    <property type="entry name" value="Dihydro-acid_dehy_C"/>
</dbReference>
<dbReference type="InterPro" id="IPR004404">
    <property type="entry name" value="DihydroxyA_deHydtase"/>
</dbReference>
<dbReference type="InterPro" id="IPR020558">
    <property type="entry name" value="DiOHA_6PGluconate_deHydtase_CS"/>
</dbReference>
<dbReference type="InterPro" id="IPR056740">
    <property type="entry name" value="ILV_EDD_C"/>
</dbReference>
<dbReference type="InterPro" id="IPR000581">
    <property type="entry name" value="ILV_EDD_N"/>
</dbReference>
<dbReference type="InterPro" id="IPR037237">
    <property type="entry name" value="IlvD/EDD_N"/>
</dbReference>
<dbReference type="NCBIfam" id="TIGR00110">
    <property type="entry name" value="ilvD"/>
    <property type="match status" value="1"/>
</dbReference>
<dbReference type="NCBIfam" id="NF002068">
    <property type="entry name" value="PRK00911.1"/>
    <property type="match status" value="1"/>
</dbReference>
<dbReference type="PANTHER" id="PTHR43661">
    <property type="entry name" value="D-XYLONATE DEHYDRATASE"/>
    <property type="match status" value="1"/>
</dbReference>
<dbReference type="PANTHER" id="PTHR43661:SF3">
    <property type="entry name" value="D-XYLONATE DEHYDRATASE YAGF-RELATED"/>
    <property type="match status" value="1"/>
</dbReference>
<dbReference type="Pfam" id="PF24877">
    <property type="entry name" value="ILV_EDD_C"/>
    <property type="match status" value="1"/>
</dbReference>
<dbReference type="Pfam" id="PF00920">
    <property type="entry name" value="ILVD_EDD_N"/>
    <property type="match status" value="1"/>
</dbReference>
<dbReference type="SUPFAM" id="SSF143975">
    <property type="entry name" value="IlvD/EDD N-terminal domain-like"/>
    <property type="match status" value="1"/>
</dbReference>
<dbReference type="SUPFAM" id="SSF52016">
    <property type="entry name" value="LeuD/IlvD-like"/>
    <property type="match status" value="1"/>
</dbReference>
<dbReference type="PROSITE" id="PS00886">
    <property type="entry name" value="ILVD_EDD_1"/>
    <property type="match status" value="1"/>
</dbReference>
<dbReference type="PROSITE" id="PS00887">
    <property type="entry name" value="ILVD_EDD_2"/>
    <property type="match status" value="1"/>
</dbReference>
<reference key="1">
    <citation type="submission" date="2003-10" db="EMBL/GenBank/DDBJ databases">
        <title>The complete genome sequence of the alkaliphilic Bacillus clausii KSM-K16.</title>
        <authorList>
            <person name="Takaki Y."/>
            <person name="Kageyama Y."/>
            <person name="Shimamura S."/>
            <person name="Suzuki H."/>
            <person name="Nishi S."/>
            <person name="Hatada Y."/>
            <person name="Kawai S."/>
            <person name="Ito S."/>
            <person name="Horikoshi K."/>
        </authorList>
    </citation>
    <scope>NUCLEOTIDE SEQUENCE [LARGE SCALE GENOMIC DNA]</scope>
    <source>
        <strain>KSM-K16</strain>
    </source>
</reference>
<sequence length="554" mass="59478">MRSNMIKKGIDRAPHRSLLRAAGVKEEDMDKPFIGVCNSYIDIIPGHMHLNKFAEVAKEAIIEAGGIPFEFNTIGVDDGIAMGHIGMRYSLPSREIICDAAETVINAHWFDGVFYIPNCDKITPGMLMAAVRTNVPAVFVSGGPMEAGRTKEGKSLSLVSVFEGVGAFSSGKMTREELLEIEQLACPTCGSCSGMFTANSMNSLMEMLGLALPGNGTLVATSTERHNLIKDAAKHLINLIEKDIRPRDIVTEETIDDAFALDMAMGGSTNTVLHTLAIANEAEIDYDLTRINEVAERVPYLCKISPASDYSMDDVHKAGGVAAIMKELIEMGAVKGDRITITGKSLYENVAHAQITNTDVIRTKETAYSPVGGLSILYGNLAPDGAVIKVGAVDPSIKTFTGEAIVFNSQEEAQEQINNGAVKEGQVVVIRYEGPKGGPGMPEMLAPTSAIQGRGLGTKVALITDGRFSGASRGISIGHISPEAAEGGPIAFVENGDMIKIDLIERTIEWEISEEELAKRREGWTEPEPKVKKGYLARYSKLVTSANTGGVMKI</sequence>
<keyword id="KW-0001">2Fe-2S</keyword>
<keyword id="KW-0028">Amino-acid biosynthesis</keyword>
<keyword id="KW-0100">Branched-chain amino acid biosynthesis</keyword>
<keyword id="KW-0408">Iron</keyword>
<keyword id="KW-0411">Iron-sulfur</keyword>
<keyword id="KW-0456">Lyase</keyword>
<keyword id="KW-0460">Magnesium</keyword>
<keyword id="KW-0479">Metal-binding</keyword>
<keyword id="KW-1185">Reference proteome</keyword>
<gene>
    <name evidence="1" type="primary">ilvD</name>
    <name type="ordered locus">ABC2646</name>
</gene>
<protein>
    <recommendedName>
        <fullName evidence="1">Dihydroxy-acid dehydratase</fullName>
        <shortName evidence="1">DAD</shortName>
        <ecNumber evidence="1">4.2.1.9</ecNumber>
    </recommendedName>
</protein>